<feature type="chain" id="PRO_1000119828" description="Oxygen-dependent coproporphyrinogen-III oxidase">
    <location>
        <begin position="1"/>
        <end position="299"/>
    </location>
</feature>
<feature type="region of interest" description="Important for dimerization" evidence="1">
    <location>
        <begin position="240"/>
        <end position="275"/>
    </location>
</feature>
<feature type="active site" description="Proton donor" evidence="1">
    <location>
        <position position="106"/>
    </location>
</feature>
<feature type="binding site" evidence="1">
    <location>
        <position position="92"/>
    </location>
    <ligand>
        <name>substrate</name>
    </ligand>
</feature>
<feature type="binding site" evidence="1">
    <location>
        <position position="96"/>
    </location>
    <ligand>
        <name>a divalent metal cation</name>
        <dbReference type="ChEBI" id="CHEBI:60240"/>
    </ligand>
</feature>
<feature type="binding site" evidence="1">
    <location>
        <position position="106"/>
    </location>
    <ligand>
        <name>a divalent metal cation</name>
        <dbReference type="ChEBI" id="CHEBI:60240"/>
    </ligand>
</feature>
<feature type="binding site" evidence="1">
    <location>
        <begin position="108"/>
        <end position="110"/>
    </location>
    <ligand>
        <name>substrate</name>
    </ligand>
</feature>
<feature type="binding site" evidence="1">
    <location>
        <position position="145"/>
    </location>
    <ligand>
        <name>a divalent metal cation</name>
        <dbReference type="ChEBI" id="CHEBI:60240"/>
    </ligand>
</feature>
<feature type="binding site" evidence="1">
    <location>
        <position position="175"/>
    </location>
    <ligand>
        <name>a divalent metal cation</name>
        <dbReference type="ChEBI" id="CHEBI:60240"/>
    </ligand>
</feature>
<feature type="binding site" evidence="1">
    <location>
        <begin position="258"/>
        <end position="260"/>
    </location>
    <ligand>
        <name>substrate</name>
    </ligand>
</feature>
<feature type="site" description="Important for dimerization" evidence="1">
    <location>
        <position position="175"/>
    </location>
</feature>
<evidence type="ECO:0000255" key="1">
    <source>
        <dbReference type="HAMAP-Rule" id="MF_00333"/>
    </source>
</evidence>
<proteinExistence type="inferred from homology"/>
<keyword id="KW-0963">Cytoplasm</keyword>
<keyword id="KW-0350">Heme biosynthesis</keyword>
<keyword id="KW-0479">Metal-binding</keyword>
<keyword id="KW-0560">Oxidoreductase</keyword>
<keyword id="KW-0627">Porphyrin biosynthesis</keyword>
<keyword id="KW-1185">Reference proteome</keyword>
<dbReference type="EC" id="1.3.3.3" evidence="1"/>
<dbReference type="EMBL" id="CP001063">
    <property type="protein sequence ID" value="ACD08066.1"/>
    <property type="molecule type" value="Genomic_DNA"/>
</dbReference>
<dbReference type="RefSeq" id="WP_000801359.1">
    <property type="nucleotide sequence ID" value="NC_010658.1"/>
</dbReference>
<dbReference type="SMR" id="B2TX24"/>
<dbReference type="STRING" id="344609.SbBS512_E2808"/>
<dbReference type="KEGG" id="sbc:SbBS512_E2808"/>
<dbReference type="HOGENOM" id="CLU_026169_0_1_6"/>
<dbReference type="UniPathway" id="UPA00251">
    <property type="reaction ID" value="UER00322"/>
</dbReference>
<dbReference type="Proteomes" id="UP000001030">
    <property type="component" value="Chromosome"/>
</dbReference>
<dbReference type="GO" id="GO:0005737">
    <property type="term" value="C:cytoplasm"/>
    <property type="evidence" value="ECO:0007669"/>
    <property type="project" value="UniProtKB-SubCell"/>
</dbReference>
<dbReference type="GO" id="GO:0004109">
    <property type="term" value="F:coproporphyrinogen oxidase activity"/>
    <property type="evidence" value="ECO:0007669"/>
    <property type="project" value="UniProtKB-UniRule"/>
</dbReference>
<dbReference type="GO" id="GO:0046872">
    <property type="term" value="F:metal ion binding"/>
    <property type="evidence" value="ECO:0007669"/>
    <property type="project" value="UniProtKB-KW"/>
</dbReference>
<dbReference type="GO" id="GO:0042803">
    <property type="term" value="F:protein homodimerization activity"/>
    <property type="evidence" value="ECO:0000250"/>
    <property type="project" value="UniProtKB"/>
</dbReference>
<dbReference type="GO" id="GO:0006782">
    <property type="term" value="P:protoporphyrinogen IX biosynthetic process"/>
    <property type="evidence" value="ECO:0007669"/>
    <property type="project" value="UniProtKB-UniRule"/>
</dbReference>
<dbReference type="FunFam" id="3.40.1500.10:FF:000001">
    <property type="entry name" value="Oxygen-dependent coproporphyrinogen-III oxidase"/>
    <property type="match status" value="1"/>
</dbReference>
<dbReference type="Gene3D" id="3.40.1500.10">
    <property type="entry name" value="Coproporphyrinogen III oxidase, aerobic"/>
    <property type="match status" value="1"/>
</dbReference>
<dbReference type="HAMAP" id="MF_00333">
    <property type="entry name" value="Coprogen_oxidas"/>
    <property type="match status" value="1"/>
</dbReference>
<dbReference type="InterPro" id="IPR001260">
    <property type="entry name" value="Coprogen_oxidase_aer"/>
</dbReference>
<dbReference type="InterPro" id="IPR036406">
    <property type="entry name" value="Coprogen_oxidase_aer_sf"/>
</dbReference>
<dbReference type="InterPro" id="IPR018375">
    <property type="entry name" value="Coprogen_oxidase_CS"/>
</dbReference>
<dbReference type="NCBIfam" id="NF003727">
    <property type="entry name" value="PRK05330.1"/>
    <property type="match status" value="1"/>
</dbReference>
<dbReference type="PANTHER" id="PTHR10755">
    <property type="entry name" value="COPROPORPHYRINOGEN III OXIDASE, MITOCHONDRIAL"/>
    <property type="match status" value="1"/>
</dbReference>
<dbReference type="PANTHER" id="PTHR10755:SF0">
    <property type="entry name" value="OXYGEN-DEPENDENT COPROPORPHYRINOGEN-III OXIDASE, MITOCHONDRIAL"/>
    <property type="match status" value="1"/>
</dbReference>
<dbReference type="Pfam" id="PF01218">
    <property type="entry name" value="Coprogen_oxidas"/>
    <property type="match status" value="1"/>
</dbReference>
<dbReference type="PIRSF" id="PIRSF000166">
    <property type="entry name" value="Coproporphyri_ox"/>
    <property type="match status" value="1"/>
</dbReference>
<dbReference type="PRINTS" id="PR00073">
    <property type="entry name" value="COPRGNOXDASE"/>
</dbReference>
<dbReference type="SUPFAM" id="SSF102886">
    <property type="entry name" value="Coproporphyrinogen III oxidase"/>
    <property type="match status" value="1"/>
</dbReference>
<dbReference type="PROSITE" id="PS01021">
    <property type="entry name" value="COPROGEN_OXIDASE"/>
    <property type="match status" value="1"/>
</dbReference>
<reference key="1">
    <citation type="submission" date="2008-05" db="EMBL/GenBank/DDBJ databases">
        <title>Complete sequence of Shigella boydii serotype 18 strain BS512.</title>
        <authorList>
            <person name="Rasko D.A."/>
            <person name="Rosovitz M."/>
            <person name="Maurelli A.T."/>
            <person name="Myers G."/>
            <person name="Seshadri R."/>
            <person name="Cer R."/>
            <person name="Jiang L."/>
            <person name="Ravel J."/>
            <person name="Sebastian Y."/>
        </authorList>
    </citation>
    <scope>NUCLEOTIDE SEQUENCE [LARGE SCALE GENOMIC DNA]</scope>
    <source>
        <strain>CDC 3083-94 / BS512</strain>
    </source>
</reference>
<organism>
    <name type="scientific">Shigella boydii serotype 18 (strain CDC 3083-94 / BS512)</name>
    <dbReference type="NCBI Taxonomy" id="344609"/>
    <lineage>
        <taxon>Bacteria</taxon>
        <taxon>Pseudomonadati</taxon>
        <taxon>Pseudomonadota</taxon>
        <taxon>Gammaproteobacteria</taxon>
        <taxon>Enterobacterales</taxon>
        <taxon>Enterobacteriaceae</taxon>
        <taxon>Shigella</taxon>
    </lineage>
</organism>
<name>HEM6_SHIB3</name>
<sequence>MKPDAHQVKQFLLNLQDTICQQLTAVDGAEFVEDSWQREAGGGGRSRVLRNDGVFEQAGVNFSHVHGEAMPASATAHRPELAGRSFEAMGVSLVVHPHNPYVPTSHANVRFFIAEKPGAEPVWWFGGGFDLTPFYGFEEDAIHWHRTARDLCLPFGEDVYPRYKKWCDDYFYLKHRNEQRGIGGLFFDDLNTPDFDHCFAFMQAVGKGYTDAYLPIVERRKAMAYGERERNFQLYRRGRYVEFNLVWDRGTLFGLQTGGRTESILMSMPPLVRWEYDYQPKDGSPEAALSEFIKVRDWV</sequence>
<accession>B2TX24</accession>
<comment type="function">
    <text evidence="1">Involved in the heme biosynthesis. Catalyzes the aerobic oxidative decarboxylation of propionate groups of rings A and B of coproporphyrinogen-III to yield the vinyl groups in protoporphyrinogen-IX.</text>
</comment>
<comment type="catalytic activity">
    <reaction evidence="1">
        <text>coproporphyrinogen III + O2 + 2 H(+) = protoporphyrinogen IX + 2 CO2 + 2 H2O</text>
        <dbReference type="Rhea" id="RHEA:18257"/>
        <dbReference type="ChEBI" id="CHEBI:15377"/>
        <dbReference type="ChEBI" id="CHEBI:15378"/>
        <dbReference type="ChEBI" id="CHEBI:15379"/>
        <dbReference type="ChEBI" id="CHEBI:16526"/>
        <dbReference type="ChEBI" id="CHEBI:57307"/>
        <dbReference type="ChEBI" id="CHEBI:57309"/>
        <dbReference type="EC" id="1.3.3.3"/>
    </reaction>
</comment>
<comment type="cofactor">
    <cofactor evidence="1">
        <name>a divalent metal cation</name>
        <dbReference type="ChEBI" id="CHEBI:60240"/>
    </cofactor>
</comment>
<comment type="pathway">
    <text evidence="1">Porphyrin-containing compound metabolism; protoporphyrin-IX biosynthesis; protoporphyrinogen-IX from coproporphyrinogen-III (O2 route): step 1/1.</text>
</comment>
<comment type="subunit">
    <text evidence="1">Homodimer.</text>
</comment>
<comment type="subcellular location">
    <subcellularLocation>
        <location evidence="1">Cytoplasm</location>
    </subcellularLocation>
</comment>
<comment type="similarity">
    <text evidence="1">Belongs to the aerobic coproporphyrinogen-III oxidase family.</text>
</comment>
<gene>
    <name evidence="1" type="primary">hemF</name>
    <name type="ordered locus">SbBS512_E2808</name>
</gene>
<protein>
    <recommendedName>
        <fullName evidence="1">Oxygen-dependent coproporphyrinogen-III oxidase</fullName>
        <shortName evidence="1">CPO</shortName>
        <shortName evidence="1">Coprogen oxidase</shortName>
        <shortName evidence="1">Coproporphyrinogenase</shortName>
        <ecNumber evidence="1">1.3.3.3</ecNumber>
    </recommendedName>
</protein>